<name>EIBC_ECOLX</name>
<accession>Q9LA56</accession>
<gene>
    <name evidence="7" type="primary">eibC</name>
</gene>
<feature type="signal peptide" evidence="3">
    <location>
        <begin position="1"/>
        <end position="26"/>
    </location>
</feature>
<feature type="chain" id="PRO_0000450747" description="Immunoglobulin-binding protein EibC">
    <location>
        <begin position="27"/>
        <end position="504"/>
    </location>
</feature>
<feature type="topological domain" description="Extracellular" evidence="6">
    <location>
        <begin position="27"/>
        <end position="453"/>
    </location>
</feature>
<feature type="transmembrane region" description="Beta stranded" evidence="2">
    <location>
        <begin position="454"/>
        <end position="464"/>
    </location>
</feature>
<feature type="transmembrane region" description="Beta stranded" evidence="2">
    <location>
        <begin position="467"/>
        <end position="478"/>
    </location>
</feature>
<feature type="transmembrane region" description="Beta stranded" evidence="2">
    <location>
        <begin position="481"/>
        <end position="490"/>
    </location>
</feature>
<feature type="transmembrane region" description="Beta stranded" evidence="2">
    <location>
        <begin position="494"/>
        <end position="504"/>
    </location>
</feature>
<feature type="region of interest" description="Surface exposed passenger domain" evidence="1">
    <location>
        <begin position="27"/>
        <end position="413"/>
    </location>
</feature>
<feature type="region of interest" description="Head domain" evidence="2">
    <location>
        <begin position="154"/>
        <end position="280"/>
    </location>
</feature>
<feature type="region of interest" description="Neck" evidence="2">
    <location>
        <begin position="281"/>
        <end position="296"/>
    </location>
</feature>
<feature type="region of interest" description="Right-handed coiled-coil (RHcc)" evidence="2">
    <location>
        <begin position="297"/>
        <end position="342"/>
    </location>
</feature>
<feature type="region of interest" description="Saddle domain" evidence="2">
    <location>
        <begin position="343"/>
        <end position="368"/>
    </location>
</feature>
<feature type="region of interest" description="Left-handed coiled-coil (LHcc)" evidence="2">
    <location>
        <begin position="369"/>
        <end position="434"/>
    </location>
</feature>
<feature type="region of interest" description="Outer membrane translocation of the passenger domain" evidence="2">
    <location>
        <begin position="411"/>
        <end position="453"/>
    </location>
</feature>
<feature type="region of interest" description="Translocator domain" evidence="2">
    <location>
        <begin position="454"/>
        <end position="504"/>
    </location>
</feature>
<feature type="coiled-coil region" evidence="3">
    <location>
        <begin position="411"/>
        <end position="438"/>
    </location>
</feature>
<protein>
    <recommendedName>
        <fullName evidence="7">Immunoglobulin-binding protein EibC</fullName>
    </recommendedName>
    <alternativeName>
        <fullName>Trimeric autotransporter adhesin EibC</fullName>
        <shortName evidence="8">TAA EibC</shortName>
    </alternativeName>
    <alternativeName>
        <fullName>Type 5 secretion system autotransporter EibC</fullName>
    </alternativeName>
</protein>
<reference evidence="12" key="1">
    <citation type="journal article" date="2000" name="Infect. Immun.">
        <title>Four different genes responsible for nonimmune immunoglobulin-binding activities within a single strain of Escherichia coli.</title>
        <authorList>
            <person name="Sandt C.H."/>
            <person name="Hill C.W."/>
        </authorList>
    </citation>
    <scope>NUCLEOTIDE SEQUENCE [GENOMIC DNA]</scope>
    <scope>BINDING TO HUMAN IGG AND IGA</scope>
    <scope>SUBCELLULAR LOCATION</scope>
    <source>
        <strain>ATCC 35328 / ECOR 9</strain>
    </source>
</reference>
<reference key="2">
    <citation type="journal article" date="2009" name="Mol. Immunol.">
        <title>The immunoglobulin-binding Eib proteins from Escherichia coli are receptors for IgG Fc.</title>
        <authorList>
            <person name="Leo J.C."/>
            <person name="Goldman A."/>
        </authorList>
    </citation>
    <scope>FUNCTION</scope>
    <scope>BINDING TO HUMAN IGA AND IGG</scope>
    <scope>SUBUNIT</scope>
</reference>
<reference key="3">
    <citation type="journal article" date="2012" name="J. Bacteriol.">
        <title>The translocation domain in trimeric autotransporter adhesins is necessary and sufficient for trimerization and autotransportation.</title>
        <authorList>
            <person name="Mikula K.M."/>
            <person name="Leo J.C."/>
            <person name="Lyskowski A."/>
            <person name="Kedracka-Krok S."/>
            <person name="Pirog A."/>
            <person name="Goldman A."/>
        </authorList>
    </citation>
    <scope>BINDING TO FC</scope>
    <scope>SUBUNIT</scope>
    <scope>SUBCELLULAR LOCATION</scope>
    <scope>TOPOLOGY</scope>
</reference>
<sequence length="504" mass="53159">MSKKFTMTLLSSSLAGLLVMSGGVSAQEEKYTVPYAIGEGKWGNTYEVVKTGGNGNFRYEVKEKNGKKRSLFTFDSKGDVIINGSGITYTIHDGALNDFAQTAEKKKNGQSQSHRMTDSVVRDVYNKVYSLQRTKITGFSVEDGENGKVSLGSDAKASGEFSVAVGTGARADKKFATAVGSWAAADGKQSTALGVGAYAYANASTAAGTAAYVDGSAIYGTAIGNYAKVDENATEGTALGAKATVTNKNSVALGANSVTTRDNEVYIGYKTGTESDKTYGTRVLGGLSDGTRNSDAATVGQLNRKVGGVYDDVKARITVESEKQKKYTDQKTSEVNEKVEARTTVGVDSDGKLTRAEGATKTIAVNDGLVALSGRTDRIDYAVGAIDGRVTRNTQSIEKNSKAIAANTRTLQQHSARLDSQQRQINENHKEMKRAAAQSAALTGLFQPYSVGKFNATAAVGGYSDQQALAVGVGYRFNEQTAAKAGVAFSDGDASWNVGVNFEF</sequence>
<dbReference type="EMBL" id="AF151674">
    <property type="protein sequence ID" value="AAF63035.1"/>
    <property type="molecule type" value="Genomic_DNA"/>
</dbReference>
<dbReference type="SMR" id="Q9LA56"/>
<dbReference type="GO" id="GO:0009279">
    <property type="term" value="C:cell outer membrane"/>
    <property type="evidence" value="ECO:0007669"/>
    <property type="project" value="UniProtKB-SubCell"/>
</dbReference>
<dbReference type="GO" id="GO:0009986">
    <property type="term" value="C:cell surface"/>
    <property type="evidence" value="ECO:0007669"/>
    <property type="project" value="UniProtKB-SubCell"/>
</dbReference>
<dbReference type="GO" id="GO:0046819">
    <property type="term" value="P:protein secretion by the type V secretion system"/>
    <property type="evidence" value="ECO:0000315"/>
    <property type="project" value="UniProtKB"/>
</dbReference>
<dbReference type="CDD" id="cd12820">
    <property type="entry name" value="LbR_YadA-like"/>
    <property type="match status" value="1"/>
</dbReference>
<dbReference type="Gene3D" id="6.10.250.1970">
    <property type="match status" value="1"/>
</dbReference>
<dbReference type="Gene3D" id="6.10.250.1980">
    <property type="match status" value="1"/>
</dbReference>
<dbReference type="Gene3D" id="3.30.1300.30">
    <property type="entry name" value="GSPII I/J protein-like"/>
    <property type="match status" value="1"/>
</dbReference>
<dbReference type="Gene3D" id="2.150.10.10">
    <property type="entry name" value="Serralysin-like metalloprotease, C-terminal"/>
    <property type="match status" value="1"/>
</dbReference>
<dbReference type="InterPro" id="IPR008640">
    <property type="entry name" value="Adhesin_Head_dom"/>
</dbReference>
<dbReference type="InterPro" id="IPR045584">
    <property type="entry name" value="Pilin-like"/>
</dbReference>
<dbReference type="InterPro" id="IPR011049">
    <property type="entry name" value="Serralysin-like_metalloprot_C"/>
</dbReference>
<dbReference type="InterPro" id="IPR005594">
    <property type="entry name" value="YadA_C"/>
</dbReference>
<dbReference type="Pfam" id="PF03895">
    <property type="entry name" value="YadA_anchor"/>
    <property type="match status" value="1"/>
</dbReference>
<dbReference type="Pfam" id="PF05658">
    <property type="entry name" value="YadA_head"/>
    <property type="match status" value="5"/>
</dbReference>
<dbReference type="SUPFAM" id="SSF101967">
    <property type="entry name" value="Adhesin YadA, collagen-binding domain"/>
    <property type="match status" value="1"/>
</dbReference>
<dbReference type="SUPFAM" id="SSF54523">
    <property type="entry name" value="Pili subunits"/>
    <property type="match status" value="1"/>
</dbReference>
<proteinExistence type="evidence at protein level"/>
<evidence type="ECO:0000250" key="1">
    <source>
        <dbReference type="UniProtKB" id="P0C2W0"/>
    </source>
</evidence>
<evidence type="ECO:0000250" key="2">
    <source>
        <dbReference type="UniProtKB" id="Q9MCI8"/>
    </source>
</evidence>
<evidence type="ECO:0000255" key="3"/>
<evidence type="ECO:0000269" key="4">
    <source>
    </source>
</evidence>
<evidence type="ECO:0000269" key="5">
    <source>
    </source>
</evidence>
<evidence type="ECO:0000269" key="6">
    <source>
    </source>
</evidence>
<evidence type="ECO:0000303" key="7">
    <source>
    </source>
</evidence>
<evidence type="ECO:0000305" key="8"/>
<evidence type="ECO:0000305" key="9">
    <source>
    </source>
</evidence>
<evidence type="ECO:0000305" key="10">
    <source>
    </source>
</evidence>
<evidence type="ECO:0000305" key="11">
    <source>
    </source>
</evidence>
<evidence type="ECO:0000312" key="12">
    <source>
        <dbReference type="EMBL" id="AAF63035.1"/>
    </source>
</evidence>
<keyword id="KW-0998">Cell outer membrane</keyword>
<keyword id="KW-0175">Coiled coil</keyword>
<keyword id="KW-0472">Membrane</keyword>
<keyword id="KW-0653">Protein transport</keyword>
<keyword id="KW-0732">Signal</keyword>
<keyword id="KW-0812">Transmembrane</keyword>
<keyword id="KW-1134">Transmembrane beta strand</keyword>
<keyword id="KW-0813">Transport</keyword>
<organism>
    <name type="scientific">Escherichia coli</name>
    <dbReference type="NCBI Taxonomy" id="562"/>
    <lineage>
        <taxon>Bacteria</taxon>
        <taxon>Pseudomonadati</taxon>
        <taxon>Pseudomonadota</taxon>
        <taxon>Gammaproteobacteria</taxon>
        <taxon>Enterobacterales</taxon>
        <taxon>Enterobacteriaceae</taxon>
        <taxon>Escherichia</taxon>
    </lineage>
</organism>
<comment type="function">
    <text evidence="4 5">Binds (in a non-immune fashion) to the Fc portion of human IgG and less well to IgA; binding occurs on the cell surface. Confers the ability to survive exposure to human serum exposure (PubMed:10722621). Binds to the Fc portion of human IgG and IgA and to whole mouse antibodies also via Fc (PubMed:19303642).</text>
</comment>
<comment type="subunit">
    <text evidence="4 5 6">Homotrimer; can probably form mixed heterotrimers in vivo (PubMed:22155776). Will form mixed heterotrimers with EibD; these are correctly located in the outer membrane and bind IgG Fc, although less well than homotrimers (PubMed:22155776). In denaturing gels runs as a band of about 200 kDa (PubMed:10722621). Binds the Fc portion of immunoglobulins; binds more than 1 Fc per subunit (PubMed:19303642).</text>
</comment>
<comment type="subcellular location">
    <subcellularLocation>
        <location evidence="6 9 10">Cell surface</location>
    </subcellularLocation>
    <subcellularLocation>
        <location evidence="6 9 10">Cell outer membrane</location>
        <topology evidence="11">Multi-pass membrane protein</topology>
    </subcellularLocation>
    <text evidence="6 9 10">The C-terminal translocator domain is localized in the outer membrane and the passenger domain is at the cell surface.</text>
</comment>
<comment type="domain">
    <text evidence="1 2 6">The signal peptide, cleaved at the inner membrane, guides the autotransporter protein to the periplasmic space (By similarity). Then, trimerization and insertion of the C-terminal translocator domain in the outer membrane forms a hydrophilic pore for the translocation of the passenger domain to the bacterial cell surface (PubMed:22155776). Trimerizes to make a lollipop-shaped form which consists of three domains: a C-terminal membrane-anchor domain, an extended coiled-coil stalk domain which binds IgG Fc, and an N-terminal head domain (By similarity).</text>
</comment>
<comment type="miscellaneous">
    <text evidence="4">Encoded in a prophage region of strain ECOR 9, upon UV treatment bacteriophage containing this gene can be isolated.</text>
</comment>
<comment type="similarity">
    <text evidence="8">Belongs to the autotransporter-2 (AT-2) (TC 1.B.40) family. Eib subfamily.</text>
</comment>